<name>TK1A_HADVE</name>
<sequence>TICTGADRPCAACCPCCPGTSCQGPESNGVVYCRNF</sequence>
<reference key="1">
    <citation type="journal article" date="2000" name="Nat. Struct. Biol.">
        <title>Discovery and characterization of a family of insecticidal neurotoxins with a rare vicinal disulfide bridge.</title>
        <authorList>
            <person name="Wang X.-H."/>
            <person name="Connor M."/>
            <person name="Smith R."/>
            <person name="Maciejewski M.W."/>
            <person name="Howden M.E.H."/>
            <person name="Nicholson G.M."/>
            <person name="Christie M.J."/>
            <person name="King G.F."/>
        </authorList>
    </citation>
    <scope>PROTEIN SEQUENCE</scope>
    <source>
        <tissue>Venom</tissue>
    </source>
</reference>
<accession>P82227</accession>
<comment type="function">
    <text evidence="2">This excitatory toxin inhibits insect calcium-activated potassium (KCa) channels (Slo-type).</text>
</comment>
<comment type="subcellular location">
    <subcellularLocation>
        <location>Secreted</location>
    </subcellularLocation>
</comment>
<comment type="tissue specificity">
    <text>Expressed by the venom gland.</text>
</comment>
<comment type="domain">
    <text evidence="1">The presence of a 'disulfide through disulfide knot' structurally defines this protein as a knottin.</text>
</comment>
<comment type="similarity">
    <text evidence="3">Belongs to the neurotoxin 11 (kappa toxin) family.</text>
</comment>
<comment type="caution">
    <text evidence="3">This toxin has the prefix lambda in its name (instead of kappa), since lambda is the Greek letter attributed to calcium-activated potassium (KCa) channel impairing toxins (according to the nomenclature of King et al., 2008).</text>
</comment>
<organism>
    <name type="scientific">Hadronyche versuta</name>
    <name type="common">Blue mountains funnel-web spider</name>
    <name type="synonym">Atrax versutus</name>
    <dbReference type="NCBI Taxonomy" id="6904"/>
    <lineage>
        <taxon>Eukaryota</taxon>
        <taxon>Metazoa</taxon>
        <taxon>Ecdysozoa</taxon>
        <taxon>Arthropoda</taxon>
        <taxon>Chelicerata</taxon>
        <taxon>Arachnida</taxon>
        <taxon>Araneae</taxon>
        <taxon>Mygalomorphae</taxon>
        <taxon>Hexathelidae</taxon>
        <taxon>Hadronyche</taxon>
    </lineage>
</organism>
<dbReference type="SMR" id="P82227"/>
<dbReference type="ArachnoServer" id="AS000172">
    <property type="toxin name" value="kappa-hexatoxin-Hv1a"/>
</dbReference>
<dbReference type="GO" id="GO:0005576">
    <property type="term" value="C:extracellular region"/>
    <property type="evidence" value="ECO:0007669"/>
    <property type="project" value="UniProtKB-SubCell"/>
</dbReference>
<dbReference type="GO" id="GO:0015459">
    <property type="term" value="F:potassium channel regulator activity"/>
    <property type="evidence" value="ECO:0007669"/>
    <property type="project" value="UniProtKB-KW"/>
</dbReference>
<dbReference type="GO" id="GO:0090729">
    <property type="term" value="F:toxin activity"/>
    <property type="evidence" value="ECO:0007669"/>
    <property type="project" value="UniProtKB-KW"/>
</dbReference>
<dbReference type="InterPro" id="IPR012499">
    <property type="entry name" value="Toxin_16"/>
</dbReference>
<dbReference type="Pfam" id="PF07945">
    <property type="entry name" value="Toxin_16"/>
    <property type="match status" value="1"/>
</dbReference>
<dbReference type="SUPFAM" id="SSF57059">
    <property type="entry name" value="omega toxin-like"/>
    <property type="match status" value="1"/>
</dbReference>
<dbReference type="PROSITE" id="PS60020">
    <property type="entry name" value="J_ACTX"/>
    <property type="match status" value="1"/>
</dbReference>
<proteinExistence type="evidence at protein level"/>
<keyword id="KW-1221">Calcium-activated potassium channel impairing toxin</keyword>
<keyword id="KW-0903">Direct protein sequencing</keyword>
<keyword id="KW-1015">Disulfide bond</keyword>
<keyword id="KW-0872">Ion channel impairing toxin</keyword>
<keyword id="KW-0960">Knottin</keyword>
<keyword id="KW-0528">Neurotoxin</keyword>
<keyword id="KW-0632">Potassium channel impairing toxin</keyword>
<keyword id="KW-0964">Secreted</keyword>
<keyword id="KW-0800">Toxin</keyword>
<feature type="peptide" id="PRO_0000044996" description="Lambda-hexatoxin-Hv1a">
    <location>
        <begin position="1"/>
        <end position="36"/>
    </location>
</feature>
<feature type="site" description="Important for the neurotoxic activity" evidence="1">
    <location>
        <position position="2"/>
    </location>
</feature>
<feature type="site" description="Critical for the neurotoxic activity" evidence="1">
    <location>
        <position position="8"/>
    </location>
</feature>
<feature type="site" description="Critical for the neurotoxic activity" evidence="1">
    <location>
        <position position="9"/>
    </location>
</feature>
<feature type="site" description="Critical for the neurotoxic activity" evidence="1">
    <location>
        <position position="13"/>
    </location>
</feature>
<feature type="site" description="Critical for the neurotoxic activity" evidence="1">
    <location>
        <position position="14"/>
    </location>
</feature>
<feature type="site" description="Important for the neurotoxic activity" evidence="1">
    <location>
        <position position="30"/>
    </location>
</feature>
<feature type="site" description="Critical for the neurotoxic activity" evidence="1">
    <location>
        <position position="32"/>
    </location>
</feature>
<feature type="disulfide bond" evidence="1">
    <location>
        <begin position="3"/>
        <end position="17"/>
    </location>
</feature>
<feature type="disulfide bond" evidence="1">
    <location>
        <begin position="10"/>
        <end position="22"/>
    </location>
</feature>
<feature type="disulfide bond" evidence="1">
    <location>
        <begin position="13"/>
        <end position="14"/>
    </location>
</feature>
<feature type="disulfide bond" evidence="1">
    <location>
        <begin position="16"/>
        <end position="33"/>
    </location>
</feature>
<evidence type="ECO:0000250" key="1"/>
<evidence type="ECO:0000250" key="2">
    <source>
        <dbReference type="UniProtKB" id="P82228"/>
    </source>
</evidence>
<evidence type="ECO:0000305" key="3"/>
<protein>
    <recommendedName>
        <fullName evidence="3">Lambda-hexatoxin-Hv1a</fullName>
        <shortName evidence="3">Lambda-HXTX-Hv1a</shortName>
    </recommendedName>
    <alternativeName>
        <fullName>Janus-atracotoxin-Hv1a</fullName>
        <shortName>Janus-AcTx-Hv1a</shortName>
    </alternativeName>
    <alternativeName>
        <fullName>Kappa-atracotoxin-Hv1a</fullName>
        <shortName>Kappa-AcTx-Hv1a</shortName>
    </alternativeName>
    <alternativeName>
        <fullName evidence="3">Kappa-hexatoxin-Hv1a</fullName>
        <shortName evidence="3">Kappa-HXTX-Hv1a</shortName>
    </alternativeName>
</protein>